<dbReference type="EMBL" id="AL646052">
    <property type="protein sequence ID" value="CAD16048.1"/>
    <property type="molecule type" value="Genomic_DNA"/>
</dbReference>
<dbReference type="RefSeq" id="WP_011002264.1">
    <property type="nucleotide sequence ID" value="NC_003295.1"/>
</dbReference>
<dbReference type="SMR" id="Q8XWX9"/>
<dbReference type="STRING" id="267608.RSc2341"/>
<dbReference type="EnsemblBacteria" id="CAD16048">
    <property type="protein sequence ID" value="CAD16048"/>
    <property type="gene ID" value="RSc2341"/>
</dbReference>
<dbReference type="KEGG" id="rso:RSc2341"/>
<dbReference type="PATRIC" id="fig|267608.8.peg.2377"/>
<dbReference type="eggNOG" id="COG1674">
    <property type="taxonomic scope" value="Bacteria"/>
</dbReference>
<dbReference type="HOGENOM" id="CLU_001981_9_7_4"/>
<dbReference type="Proteomes" id="UP000001436">
    <property type="component" value="Chromosome"/>
</dbReference>
<dbReference type="GO" id="GO:0005886">
    <property type="term" value="C:plasma membrane"/>
    <property type="evidence" value="ECO:0007669"/>
    <property type="project" value="UniProtKB-SubCell"/>
</dbReference>
<dbReference type="GO" id="GO:0005524">
    <property type="term" value="F:ATP binding"/>
    <property type="evidence" value="ECO:0007669"/>
    <property type="project" value="UniProtKB-KW"/>
</dbReference>
<dbReference type="GO" id="GO:0003677">
    <property type="term" value="F:DNA binding"/>
    <property type="evidence" value="ECO:0007669"/>
    <property type="project" value="UniProtKB-KW"/>
</dbReference>
<dbReference type="GO" id="GO:0051301">
    <property type="term" value="P:cell division"/>
    <property type="evidence" value="ECO:0007669"/>
    <property type="project" value="UniProtKB-KW"/>
</dbReference>
<dbReference type="GO" id="GO:0007059">
    <property type="term" value="P:chromosome segregation"/>
    <property type="evidence" value="ECO:0007669"/>
    <property type="project" value="UniProtKB-KW"/>
</dbReference>
<dbReference type="CDD" id="cd01127">
    <property type="entry name" value="TrwB_TraG_TraD_VirD4"/>
    <property type="match status" value="1"/>
</dbReference>
<dbReference type="FunFam" id="3.40.50.300:FF:000209">
    <property type="entry name" value="Cell division protein FtsK"/>
    <property type="match status" value="1"/>
</dbReference>
<dbReference type="Gene3D" id="3.30.980.40">
    <property type="match status" value="1"/>
</dbReference>
<dbReference type="Gene3D" id="3.40.50.300">
    <property type="entry name" value="P-loop containing nucleotide triphosphate hydrolases"/>
    <property type="match status" value="1"/>
</dbReference>
<dbReference type="Gene3D" id="1.10.10.10">
    <property type="entry name" value="Winged helix-like DNA-binding domain superfamily/Winged helix DNA-binding domain"/>
    <property type="match status" value="1"/>
</dbReference>
<dbReference type="InterPro" id="IPR050206">
    <property type="entry name" value="FtsK/SpoIIIE/SftA"/>
</dbReference>
<dbReference type="InterPro" id="IPR025199">
    <property type="entry name" value="FtsK_4TM"/>
</dbReference>
<dbReference type="InterPro" id="IPR041027">
    <property type="entry name" value="FtsK_alpha"/>
</dbReference>
<dbReference type="InterPro" id="IPR002543">
    <property type="entry name" value="FtsK_dom"/>
</dbReference>
<dbReference type="InterPro" id="IPR018541">
    <property type="entry name" value="Ftsk_gamma"/>
</dbReference>
<dbReference type="InterPro" id="IPR027417">
    <property type="entry name" value="P-loop_NTPase"/>
</dbReference>
<dbReference type="InterPro" id="IPR036388">
    <property type="entry name" value="WH-like_DNA-bd_sf"/>
</dbReference>
<dbReference type="InterPro" id="IPR036390">
    <property type="entry name" value="WH_DNA-bd_sf"/>
</dbReference>
<dbReference type="PANTHER" id="PTHR22683:SF41">
    <property type="entry name" value="DNA TRANSLOCASE FTSK"/>
    <property type="match status" value="1"/>
</dbReference>
<dbReference type="PANTHER" id="PTHR22683">
    <property type="entry name" value="SPORULATION PROTEIN RELATED"/>
    <property type="match status" value="1"/>
</dbReference>
<dbReference type="Pfam" id="PF13491">
    <property type="entry name" value="FtsK_4TM"/>
    <property type="match status" value="1"/>
</dbReference>
<dbReference type="Pfam" id="PF17854">
    <property type="entry name" value="FtsK_alpha"/>
    <property type="match status" value="1"/>
</dbReference>
<dbReference type="Pfam" id="PF09397">
    <property type="entry name" value="FtsK_gamma"/>
    <property type="match status" value="1"/>
</dbReference>
<dbReference type="Pfam" id="PF01580">
    <property type="entry name" value="FtsK_SpoIIIE"/>
    <property type="match status" value="1"/>
</dbReference>
<dbReference type="SMART" id="SM00843">
    <property type="entry name" value="Ftsk_gamma"/>
    <property type="match status" value="1"/>
</dbReference>
<dbReference type="SUPFAM" id="SSF52540">
    <property type="entry name" value="P-loop containing nucleoside triphosphate hydrolases"/>
    <property type="match status" value="1"/>
</dbReference>
<dbReference type="SUPFAM" id="SSF46785">
    <property type="entry name" value="Winged helix' DNA-binding domain"/>
    <property type="match status" value="1"/>
</dbReference>
<dbReference type="PROSITE" id="PS50901">
    <property type="entry name" value="FTSK"/>
    <property type="match status" value="1"/>
</dbReference>
<gene>
    <name type="primary">ftsK2</name>
    <name type="ordered locus">RSc2341</name>
    <name type="ORF">RS01205</name>
</gene>
<sequence length="781" mass="84610">MARASTTPTTRTDPAALPSRIGRLLGEVRWFLLLAVTIAFLTILLSYNKADPGWSHASQVDDVRNLGGRVGAWFADVLLFVFGASAYWWALLLLRRVWRGWRELMSDERVPRAATPRVDAGVTWFGFALILSASMGLEAIRMHTLHMKLPRAPGGVLGDLIGGSLQHALGFTGGTLLLLLMFTVGLSLFFHFSWLNLAEQIGAGVETLFVGFKTRRENKQDRAIGEAAKVEREEVVETRRVRIEEAPPVQIVRPAAVVKSERVEREKQQPLFVDIQDSDLPALALLDAVPPAQETVSAETLEFTSRLIEKKLKDFGVEVTVVAAYPGPVITRYEIEPATGVKGSQIVNLAKDLARSLSLVSVRVVETIPGKNCMGLELPNPKRQAVRLAEILGSQVYNESASQLTMALGKDIAGKPVVADLAKMPHCMVAGTTGSGKSVGINAMILSLLYKARADAVRLILIDPKMLELSIYEGIPHLLCPVVTDMRQAGHALNWAVGEMERRYKLMSKMGVRNLAGFNKKIEEAAAREEKIHNPFSLTPDAPEPLDKLPMIVIVIDELADLMMVVGKKVEELIARIAQKARAAGIHLVLATQRPSVDVITGLIKANVPTRIAFQVSSKIDSRTILDQQGAEALLGMGDMLYLAPGTGLPVRVHGAFVSDDEVHRVVENLKSQGEPNYIEGLLEGGTADGEGGGDGFGGGAGLAGGGAGEADPLYDQAVDVVLKNRRASISLVQRHLRIGYNRAARLLEDMEKAGLVSAMSGNGNREILAPNRNGNVVEEE</sequence>
<evidence type="ECO:0000250" key="1"/>
<evidence type="ECO:0000255" key="2"/>
<evidence type="ECO:0000255" key="3">
    <source>
        <dbReference type="PROSITE-ProRule" id="PRU00289"/>
    </source>
</evidence>
<evidence type="ECO:0000305" key="4"/>
<reference key="1">
    <citation type="journal article" date="2002" name="Nature">
        <title>Genome sequence of the plant pathogen Ralstonia solanacearum.</title>
        <authorList>
            <person name="Salanoubat M."/>
            <person name="Genin S."/>
            <person name="Artiguenave F."/>
            <person name="Gouzy J."/>
            <person name="Mangenot S."/>
            <person name="Arlat M."/>
            <person name="Billault A."/>
            <person name="Brottier P."/>
            <person name="Camus J.-C."/>
            <person name="Cattolico L."/>
            <person name="Chandler M."/>
            <person name="Choisne N."/>
            <person name="Claudel-Renard C."/>
            <person name="Cunnac S."/>
            <person name="Demange N."/>
            <person name="Gaspin C."/>
            <person name="Lavie M."/>
            <person name="Moisan A."/>
            <person name="Robert C."/>
            <person name="Saurin W."/>
            <person name="Schiex T."/>
            <person name="Siguier P."/>
            <person name="Thebault P."/>
            <person name="Whalen M."/>
            <person name="Wincker P."/>
            <person name="Levy M."/>
            <person name="Weissenbach J."/>
            <person name="Boucher C.A."/>
        </authorList>
    </citation>
    <scope>NUCLEOTIDE SEQUENCE [LARGE SCALE GENOMIC DNA]</scope>
    <source>
        <strain>ATCC BAA-1114 / GMI1000</strain>
    </source>
</reference>
<protein>
    <recommendedName>
        <fullName>DNA translocase FtsK 2</fullName>
    </recommendedName>
</protein>
<accession>Q8XWX9</accession>
<proteinExistence type="inferred from homology"/>
<organism>
    <name type="scientific">Ralstonia nicotianae (strain ATCC BAA-1114 / GMI1000)</name>
    <name type="common">Ralstonia solanacearum</name>
    <dbReference type="NCBI Taxonomy" id="267608"/>
    <lineage>
        <taxon>Bacteria</taxon>
        <taxon>Pseudomonadati</taxon>
        <taxon>Pseudomonadota</taxon>
        <taxon>Betaproteobacteria</taxon>
        <taxon>Burkholderiales</taxon>
        <taxon>Burkholderiaceae</taxon>
        <taxon>Ralstonia</taxon>
        <taxon>Ralstonia solanacearum species complex</taxon>
    </lineage>
</organism>
<feature type="chain" id="PRO_0000098283" description="DNA translocase FtsK 2">
    <location>
        <begin position="1"/>
        <end position="781"/>
    </location>
</feature>
<feature type="transmembrane region" description="Helical" evidence="2">
    <location>
        <begin position="24"/>
        <end position="44"/>
    </location>
</feature>
<feature type="transmembrane region" description="Helical" evidence="2">
    <location>
        <begin position="74"/>
        <end position="94"/>
    </location>
</feature>
<feature type="transmembrane region" description="Helical" evidence="2">
    <location>
        <begin position="120"/>
        <end position="140"/>
    </location>
</feature>
<feature type="transmembrane region" description="Helical" evidence="2">
    <location>
        <begin position="170"/>
        <end position="190"/>
    </location>
</feature>
<feature type="topological domain" description="Cytoplasmic" evidence="2">
    <location>
        <begin position="191"/>
        <end position="781"/>
    </location>
</feature>
<feature type="domain" description="FtsK" evidence="3">
    <location>
        <begin position="414"/>
        <end position="623"/>
    </location>
</feature>
<feature type="binding site" evidence="3">
    <location>
        <begin position="434"/>
        <end position="439"/>
    </location>
    <ligand>
        <name>ATP</name>
        <dbReference type="ChEBI" id="CHEBI:30616"/>
    </ligand>
</feature>
<keyword id="KW-0067">ATP-binding</keyword>
<keyword id="KW-0131">Cell cycle</keyword>
<keyword id="KW-0132">Cell division</keyword>
<keyword id="KW-0997">Cell inner membrane</keyword>
<keyword id="KW-1003">Cell membrane</keyword>
<keyword id="KW-0159">Chromosome partition</keyword>
<keyword id="KW-0238">DNA-binding</keyword>
<keyword id="KW-0472">Membrane</keyword>
<keyword id="KW-0547">Nucleotide-binding</keyword>
<keyword id="KW-1185">Reference proteome</keyword>
<keyword id="KW-0812">Transmembrane</keyword>
<keyword id="KW-1133">Transmembrane helix</keyword>
<comment type="function">
    <text evidence="1">Essential cell division protein that coordinates cell division and chromosome segregation. The N-terminus is involved in assembly of the cell-division machinery. The C-terminus functions as a DNA motor that moves dsDNA in an ATP-dependent manner towards the dif recombination site, which is located within the replication terminus region. Translocation stops specifically at Xer-dif sites, where FtsK interacts with the Xer recombinase, allowing activation of chromosome unlinking by recombination. FtsK orienting polar sequences (KOPS) guide the direction of DNA translocation. FtsK can remove proteins from DNA as it translocates, but translocation stops specifically at XerCD-dif site, thereby preventing removal of XerC and XerD from dif (By similarity).</text>
</comment>
<comment type="subunit">
    <text evidence="1">Homohexamer. Forms a ring that surrounds DNA (By similarity).</text>
</comment>
<comment type="subcellular location">
    <subcellularLocation>
        <location evidence="1">Cell inner membrane</location>
        <topology evidence="1">Multi-pass membrane protein</topology>
    </subcellularLocation>
    <text evidence="1">Located at the septum.</text>
</comment>
<comment type="domain">
    <text evidence="1">Consists of an N-terminal domain, which is sufficient for the localization to the septal ring and is required for cell division, followed by a linker domain, and a C-terminal domain, which forms the translocation motor involved in chromosome segregation. The C-terminal domain can be further subdivided into alpha, beta and gamma subdomains. The alpha and beta subdomains multimerise to produce a hexameric ring, contain the nucleotide binding motif and form the DNA pump. The gamma subdomain is a regulatory subdomain that controls translocation of DNA by recognition of KOPS motifs and interacts with XerD recombinase (By similarity).</text>
</comment>
<comment type="similarity">
    <text evidence="4">Belongs to the FtsK/SpoIIIE/SftA family.</text>
</comment>
<name>FTSK2_RALN1</name>